<dbReference type="EMBL" id="AC003063">
    <property type="status" value="NOT_ANNOTATED_CDS"/>
    <property type="molecule type" value="Genomic_DNA"/>
</dbReference>
<dbReference type="EMBL" id="AC005817">
    <property type="status" value="NOT_ANNOTATED_CDS"/>
    <property type="molecule type" value="Genomic_DNA"/>
</dbReference>
<dbReference type="EMBL" id="AC004412">
    <property type="status" value="NOT_ANNOTATED_CDS"/>
    <property type="molecule type" value="Genomic_DNA"/>
</dbReference>
<dbReference type="EMBL" id="GL456175">
    <property type="status" value="NOT_ANNOTATED_CDS"/>
    <property type="molecule type" value="Genomic_DNA"/>
</dbReference>
<dbReference type="EMBL" id="BC125356">
    <property type="protein sequence ID" value="AAI25357.1"/>
    <property type="molecule type" value="mRNA"/>
</dbReference>
<dbReference type="EMBL" id="BC132637">
    <property type="protein sequence ID" value="AAI32638.2"/>
    <property type="status" value="ALT_INIT"/>
    <property type="molecule type" value="mRNA"/>
</dbReference>
<dbReference type="CCDS" id="CCDS49786.2"/>
<dbReference type="RefSeq" id="NP_083745.2">
    <property type="nucleotide sequence ID" value="NM_029469.2"/>
</dbReference>
<dbReference type="SMR" id="P56916"/>
<dbReference type="FunCoup" id="P56916">
    <property type="interactions" value="673"/>
</dbReference>
<dbReference type="STRING" id="10090.ENSMUSP00000155932"/>
<dbReference type="GlyGen" id="P56916">
    <property type="glycosylation" value="1 site"/>
</dbReference>
<dbReference type="iPTMnet" id="P56916"/>
<dbReference type="PhosphoSitePlus" id="P56916"/>
<dbReference type="PaxDb" id="10090-ENSMUSP00000012279"/>
<dbReference type="ProteomicsDB" id="271441"/>
<dbReference type="ProteomicsDB" id="340760"/>
<dbReference type="Antibodypedia" id="7476">
    <property type="antibodies" value="64 antibodies from 21 providers"/>
</dbReference>
<dbReference type="DNASU" id="195333"/>
<dbReference type="Ensembl" id="ENSMUST00000012279.6">
    <property type="protein sequence ID" value="ENSMUSP00000012279.5"/>
    <property type="gene ID" value="ENSMUSG00000022738.8"/>
</dbReference>
<dbReference type="GeneID" id="195333"/>
<dbReference type="KEGG" id="mmu:195333"/>
<dbReference type="UCSC" id="uc012aby.1">
    <property type="organism name" value="mouse"/>
</dbReference>
<dbReference type="AGR" id="MGI:892006"/>
<dbReference type="CTD" id="2928"/>
<dbReference type="MGI" id="MGI:892006">
    <property type="gene designation" value="Gsc2"/>
</dbReference>
<dbReference type="VEuPathDB" id="HostDB:ENSMUSG00000022738"/>
<dbReference type="eggNOG" id="KOG0490">
    <property type="taxonomic scope" value="Eukaryota"/>
</dbReference>
<dbReference type="GeneTree" id="ENSGT00940000162536"/>
<dbReference type="HOGENOM" id="CLU_122191_0_0_1"/>
<dbReference type="InParanoid" id="P56916"/>
<dbReference type="OrthoDB" id="3225452at2759"/>
<dbReference type="TreeFam" id="TF351613"/>
<dbReference type="BioGRID-ORCS" id="195333">
    <property type="hits" value="0 hits in 77 CRISPR screens"/>
</dbReference>
<dbReference type="PRO" id="PR:P56916"/>
<dbReference type="Proteomes" id="UP000000589">
    <property type="component" value="Chromosome 16"/>
</dbReference>
<dbReference type="RNAct" id="P56916">
    <property type="molecule type" value="protein"/>
</dbReference>
<dbReference type="Bgee" id="ENSMUSG00000022738">
    <property type="expression patterns" value="Expressed in gastrula and 44 other cell types or tissues"/>
</dbReference>
<dbReference type="GO" id="GO:0005634">
    <property type="term" value="C:nucleus"/>
    <property type="evidence" value="ECO:0000314"/>
    <property type="project" value="MGI"/>
</dbReference>
<dbReference type="GO" id="GO:0003677">
    <property type="term" value="F:DNA binding"/>
    <property type="evidence" value="ECO:0007669"/>
    <property type="project" value="UniProtKB-KW"/>
</dbReference>
<dbReference type="GO" id="GO:0003700">
    <property type="term" value="F:DNA-binding transcription factor activity"/>
    <property type="evidence" value="ECO:0000266"/>
    <property type="project" value="MGI"/>
</dbReference>
<dbReference type="GO" id="GO:0000981">
    <property type="term" value="F:DNA-binding transcription factor activity, RNA polymerase II-specific"/>
    <property type="evidence" value="ECO:0007669"/>
    <property type="project" value="InterPro"/>
</dbReference>
<dbReference type="GO" id="GO:0006357">
    <property type="term" value="P:regulation of transcription by RNA polymerase II"/>
    <property type="evidence" value="ECO:0000266"/>
    <property type="project" value="MGI"/>
</dbReference>
<dbReference type="CDD" id="cd00086">
    <property type="entry name" value="homeodomain"/>
    <property type="match status" value="1"/>
</dbReference>
<dbReference type="FunFam" id="1.10.10.60:FF:000223">
    <property type="entry name" value="Goosecoid homeobox 2"/>
    <property type="match status" value="1"/>
</dbReference>
<dbReference type="Gene3D" id="1.10.10.60">
    <property type="entry name" value="Homeodomain-like"/>
    <property type="match status" value="1"/>
</dbReference>
<dbReference type="InterPro" id="IPR051440">
    <property type="entry name" value="Goosecoid-like_HB"/>
</dbReference>
<dbReference type="InterPro" id="IPR001356">
    <property type="entry name" value="HD"/>
</dbReference>
<dbReference type="InterPro" id="IPR017970">
    <property type="entry name" value="Homeobox_CS"/>
</dbReference>
<dbReference type="InterPro" id="IPR009057">
    <property type="entry name" value="Homeodomain-like_sf"/>
</dbReference>
<dbReference type="PANTHER" id="PTHR46643:SF1">
    <property type="entry name" value="HOMEOBOX PROTEIN GOOSECOID-2"/>
    <property type="match status" value="1"/>
</dbReference>
<dbReference type="PANTHER" id="PTHR46643">
    <property type="entry name" value="HOMEOBOX PROTEIN GOOSECOID-RELATED"/>
    <property type="match status" value="1"/>
</dbReference>
<dbReference type="Pfam" id="PF00046">
    <property type="entry name" value="Homeodomain"/>
    <property type="match status" value="1"/>
</dbReference>
<dbReference type="SMART" id="SM00389">
    <property type="entry name" value="HOX"/>
    <property type="match status" value="1"/>
</dbReference>
<dbReference type="SUPFAM" id="SSF46689">
    <property type="entry name" value="Homeodomain-like"/>
    <property type="match status" value="1"/>
</dbReference>
<dbReference type="PROSITE" id="PS00027">
    <property type="entry name" value="HOMEOBOX_1"/>
    <property type="match status" value="1"/>
</dbReference>
<dbReference type="PROSITE" id="PS50071">
    <property type="entry name" value="HOMEOBOX_2"/>
    <property type="match status" value="1"/>
</dbReference>
<name>GSC2_MOUSE</name>
<proteinExistence type="evidence at transcript level"/>
<protein>
    <recommendedName>
        <fullName>Homeobox protein goosecoid-2</fullName>
        <shortName>GSC-2</shortName>
    </recommendedName>
    <alternativeName>
        <fullName>Homeobox protein goosecoid-like</fullName>
        <shortName>GSC-L</shortName>
    </alternativeName>
</protein>
<comment type="function">
    <text>May have a role in development. May regulate its own transcription. May bind the bicoid consensus sequence TAATCC.</text>
</comment>
<comment type="subcellular location">
    <subcellularLocation>
        <location evidence="1">Nucleus</location>
    </subcellularLocation>
</comment>
<comment type="tissue specificity">
    <text evidence="3">Expressed in adult testis.</text>
</comment>
<comment type="developmental stage">
    <text>Has a biphasic expression. Present in embryos in 8.5-10.5 dpc, reduced levels in 11.5 dpc and 13.5 dpc and absent in 15.5 dpc. Found in some adult tissues.</text>
</comment>
<comment type="similarity">
    <text evidence="4">Belongs to the paired homeobox family. Bicoid subfamily.</text>
</comment>
<comment type="sequence caution" evidence="4">
    <conflict type="erroneous initiation">
        <sequence resource="EMBL-CDS" id="AAI32638"/>
    </conflict>
    <text>Extended N-terminus.</text>
</comment>
<reference key="1">
    <citation type="journal article" date="1997" name="Genome Res.">
        <title>A region of mouse chromosome 16 is syntenic to the DiGeorge, velocardiofacial syndrome minimal critical region.</title>
        <authorList>
            <person name="Galili N."/>
            <person name="Baldwin H.S."/>
            <person name="Lund J."/>
            <person name="Reeves R."/>
            <person name="Gong W."/>
            <person name="Wang Z."/>
            <person name="Roe B.A."/>
            <person name="Emanuel B.S."/>
            <person name="Nayak S."/>
            <person name="Mickanin C."/>
            <person name="Budarf M.L."/>
            <person name="Buck C.A."/>
        </authorList>
    </citation>
    <scope>NUCLEOTIDE SEQUENCE [GENOMIC DNA]</scope>
</reference>
<reference key="2">
    <citation type="journal article" date="1997" name="Genome Res.">
        <authorList>
            <person name="Galili N."/>
            <person name="Baldwin H.S."/>
            <person name="Lund J."/>
            <person name="Reeves R."/>
            <person name="Gong W."/>
            <person name="Wang Z."/>
            <person name="Roe B.A."/>
            <person name="Emanuel B.S."/>
            <person name="Nayak S."/>
            <person name="Mickanin C."/>
            <person name="Budarf M.L."/>
            <person name="Buck C.A."/>
        </authorList>
    </citation>
    <scope>ERRATUM OF PUBMED:9037598</scope>
</reference>
<reference key="3">
    <citation type="journal article" date="2009" name="PLoS Biol.">
        <title>Lineage-specific biology revealed by a finished genome assembly of the mouse.</title>
        <authorList>
            <person name="Church D.M."/>
            <person name="Goodstadt L."/>
            <person name="Hillier L.W."/>
            <person name="Zody M.C."/>
            <person name="Goldstein S."/>
            <person name="She X."/>
            <person name="Bult C.J."/>
            <person name="Agarwala R."/>
            <person name="Cherry J.L."/>
            <person name="DiCuccio M."/>
            <person name="Hlavina W."/>
            <person name="Kapustin Y."/>
            <person name="Meric P."/>
            <person name="Maglott D."/>
            <person name="Birtle Z."/>
            <person name="Marques A.C."/>
            <person name="Graves T."/>
            <person name="Zhou S."/>
            <person name="Teague B."/>
            <person name="Potamousis K."/>
            <person name="Churas C."/>
            <person name="Place M."/>
            <person name="Herschleb J."/>
            <person name="Runnheim R."/>
            <person name="Forrest D."/>
            <person name="Amos-Landgraf J."/>
            <person name="Schwartz D.C."/>
            <person name="Cheng Z."/>
            <person name="Lindblad-Toh K."/>
            <person name="Eichler E.E."/>
            <person name="Ponting C.P."/>
        </authorList>
    </citation>
    <scope>NUCLEOTIDE SEQUENCE [LARGE SCALE GENOMIC DNA]</scope>
    <source>
        <strain>C57BL/6J</strain>
    </source>
</reference>
<reference key="4">
    <citation type="journal article" date="2004" name="Genome Res.">
        <title>The status, quality, and expansion of the NIH full-length cDNA project: the Mammalian Gene Collection (MGC).</title>
        <authorList>
            <consortium name="The MGC Project Team"/>
        </authorList>
    </citation>
    <scope>NUCLEOTIDE SEQUENCE [LARGE SCALE MRNA]</scope>
    <source>
        <tissue>Brain</tissue>
    </source>
</reference>
<reference key="5">
    <citation type="journal article" date="1997" name="Genomics">
        <title>Characterization and mutation analysis of goosecoid-like (GSCL), a homeodomain-containing gene that maps to the critical region for VCFS/DGS on 22q11.</title>
        <authorList>
            <person name="Funke B."/>
            <person name="St Jore B."/>
            <person name="Puech A."/>
            <person name="Sirotkin H."/>
            <person name="Edelmann L."/>
            <person name="Carlson C."/>
            <person name="Raft S."/>
            <person name="Pandita R.K."/>
            <person name="Kucherlapati R."/>
            <person name="Skoultchi A."/>
            <person name="Morrow B.E."/>
        </authorList>
    </citation>
    <scope>TISSUE SPECIFICITY</scope>
</reference>
<sequence>MATAGSAASRRDPGRPCPFSIEHILSSLPERRPATRPPQPVGGRNPAELDEPEAPVPAAPCACCCCCNPRAATRGTPETSSGPGLRLAWPLRLAPATPSPLTAPRAGSPALTGTSGPGPQRRTRRHRTIFSEEQLQALEALFVQNQYPDVGTRERLAVRIRLREERVEVWFKNRRAKWRHQKRASSSRLLPGTKKTPKESC</sequence>
<organism>
    <name type="scientific">Mus musculus</name>
    <name type="common">Mouse</name>
    <dbReference type="NCBI Taxonomy" id="10090"/>
    <lineage>
        <taxon>Eukaryota</taxon>
        <taxon>Metazoa</taxon>
        <taxon>Chordata</taxon>
        <taxon>Craniata</taxon>
        <taxon>Vertebrata</taxon>
        <taxon>Euteleostomi</taxon>
        <taxon>Mammalia</taxon>
        <taxon>Eutheria</taxon>
        <taxon>Euarchontoglires</taxon>
        <taxon>Glires</taxon>
        <taxon>Rodentia</taxon>
        <taxon>Myomorpha</taxon>
        <taxon>Muroidea</taxon>
        <taxon>Muridae</taxon>
        <taxon>Murinae</taxon>
        <taxon>Mus</taxon>
        <taxon>Mus</taxon>
    </lineage>
</organism>
<keyword id="KW-0238">DNA-binding</keyword>
<keyword id="KW-0371">Homeobox</keyword>
<keyword id="KW-0539">Nucleus</keyword>
<keyword id="KW-1185">Reference proteome</keyword>
<evidence type="ECO:0000255" key="1">
    <source>
        <dbReference type="PROSITE-ProRule" id="PRU00108"/>
    </source>
</evidence>
<evidence type="ECO:0000256" key="2">
    <source>
        <dbReference type="SAM" id="MobiDB-lite"/>
    </source>
</evidence>
<evidence type="ECO:0000269" key="3">
    <source>
    </source>
</evidence>
<evidence type="ECO:0000305" key="4"/>
<feature type="chain" id="PRO_0000048892" description="Homeobox protein goosecoid-2">
    <location>
        <begin position="1"/>
        <end position="201"/>
    </location>
</feature>
<feature type="DNA-binding region" description="Homeobox" evidence="1">
    <location>
        <begin position="123"/>
        <end position="182"/>
    </location>
</feature>
<feature type="region of interest" description="Disordered" evidence="2">
    <location>
        <begin position="1"/>
        <end position="55"/>
    </location>
</feature>
<feature type="region of interest" description="Disordered" evidence="2">
    <location>
        <begin position="95"/>
        <end position="124"/>
    </location>
</feature>
<feature type="region of interest" description="Disordered" evidence="2">
    <location>
        <begin position="179"/>
        <end position="201"/>
    </location>
</feature>
<feature type="compositionally biased region" description="Low complexity" evidence="2">
    <location>
        <begin position="95"/>
        <end position="106"/>
    </location>
</feature>
<accession>P56916</accession>
<accession>A2RTU1</accession>
<accession>Q05A98</accession>
<gene>
    <name type="primary">Gsc2</name>
    <name type="synonym">Gscl</name>
</gene>